<sequence>MPIRVPDELPAVNFLREENVFVMTTSRASGQEIRPLKVLILNLMPKKIETENQFLRLLSNSPLQVDIQLLRIDSRESRNTPAEHLNNFYCNFEDIQEQNFDGLIVTGAPLGLVEFNDVAYWPQIKQVLEWSKDHVTSTLFVCWAVQAALNILYGIPKQTRTDKLSGVYEHHILHPHALLTRGFDDSFLAPHSRYADFPAALIRDYTDLEILAETEEGDAYLFASKDKRIAFVTGHPEYDAQTLAQEYFRDVEAGLDPDVPYNYFPHNDPQNTPRASWRSHGNLLFTNWLNYYVYQITPYDLRHMNPTLD</sequence>
<reference key="1">
    <citation type="journal article" date="2002" name="Proc. Natl. Acad. Sci. U.S.A.">
        <title>Extensive mosaic structure revealed by the complete genome sequence of uropathogenic Escherichia coli.</title>
        <authorList>
            <person name="Welch R.A."/>
            <person name="Burland V."/>
            <person name="Plunkett G. III"/>
            <person name="Redford P."/>
            <person name="Roesch P."/>
            <person name="Rasko D."/>
            <person name="Buckles E.L."/>
            <person name="Liou S.-R."/>
            <person name="Boutin A."/>
            <person name="Hackett J."/>
            <person name="Stroud D."/>
            <person name="Mayhew G.F."/>
            <person name="Rose D.J."/>
            <person name="Zhou S."/>
            <person name="Schwartz D.C."/>
            <person name="Perna N.T."/>
            <person name="Mobley H.L.T."/>
            <person name="Donnenberg M.S."/>
            <person name="Blattner F.R."/>
        </authorList>
    </citation>
    <scope>NUCLEOTIDE SEQUENCE [LARGE SCALE GENOMIC DNA]</scope>
    <source>
        <strain>CFT073 / ATCC 700928 / UPEC</strain>
    </source>
</reference>
<dbReference type="EC" id="2.3.1.46" evidence="2"/>
<dbReference type="EMBL" id="AE014075">
    <property type="protein sequence ID" value="AAN83396.1"/>
    <property type="molecule type" value="Genomic_DNA"/>
</dbReference>
<dbReference type="RefSeq" id="WP_001122785.1">
    <property type="nucleotide sequence ID" value="NZ_CP051263.1"/>
</dbReference>
<dbReference type="SMR" id="Q8FB64"/>
<dbReference type="STRING" id="199310.c4970"/>
<dbReference type="KEGG" id="ecc:c4970"/>
<dbReference type="eggNOG" id="COG1897">
    <property type="taxonomic scope" value="Bacteria"/>
</dbReference>
<dbReference type="HOGENOM" id="CLU_057851_0_1_6"/>
<dbReference type="BioCyc" id="ECOL199310:C4970-MONOMER"/>
<dbReference type="UniPathway" id="UPA00051">
    <property type="reaction ID" value="UER00075"/>
</dbReference>
<dbReference type="Proteomes" id="UP000001410">
    <property type="component" value="Chromosome"/>
</dbReference>
<dbReference type="GO" id="GO:0005737">
    <property type="term" value="C:cytoplasm"/>
    <property type="evidence" value="ECO:0007669"/>
    <property type="project" value="UniProtKB-SubCell"/>
</dbReference>
<dbReference type="GO" id="GO:0004414">
    <property type="term" value="F:homoserine O-acetyltransferase activity"/>
    <property type="evidence" value="ECO:0007669"/>
    <property type="project" value="UniProtKB-UniRule"/>
</dbReference>
<dbReference type="GO" id="GO:0008899">
    <property type="term" value="F:homoserine O-succinyltransferase activity"/>
    <property type="evidence" value="ECO:0007669"/>
    <property type="project" value="UniProtKB-EC"/>
</dbReference>
<dbReference type="GO" id="GO:0019281">
    <property type="term" value="P:L-methionine biosynthetic process from homoserine via O-succinyl-L-homoserine and cystathionine"/>
    <property type="evidence" value="ECO:0007669"/>
    <property type="project" value="InterPro"/>
</dbReference>
<dbReference type="CDD" id="cd03131">
    <property type="entry name" value="GATase1_HTS"/>
    <property type="match status" value="1"/>
</dbReference>
<dbReference type="FunFam" id="3.40.50.880:FF:000004">
    <property type="entry name" value="Homoserine O-succinyltransferase"/>
    <property type="match status" value="1"/>
</dbReference>
<dbReference type="Gene3D" id="3.40.50.880">
    <property type="match status" value="1"/>
</dbReference>
<dbReference type="HAMAP" id="MF_00295">
    <property type="entry name" value="MetA_acyltransf"/>
    <property type="match status" value="1"/>
</dbReference>
<dbReference type="InterPro" id="IPR029062">
    <property type="entry name" value="Class_I_gatase-like"/>
</dbReference>
<dbReference type="InterPro" id="IPR005697">
    <property type="entry name" value="HST_MetA"/>
</dbReference>
<dbReference type="InterPro" id="IPR033752">
    <property type="entry name" value="MetA_family"/>
</dbReference>
<dbReference type="NCBIfam" id="TIGR01001">
    <property type="entry name" value="metA"/>
    <property type="match status" value="1"/>
</dbReference>
<dbReference type="PANTHER" id="PTHR20919">
    <property type="entry name" value="HOMOSERINE O-SUCCINYLTRANSFERASE"/>
    <property type="match status" value="1"/>
</dbReference>
<dbReference type="PANTHER" id="PTHR20919:SF0">
    <property type="entry name" value="HOMOSERINE O-SUCCINYLTRANSFERASE"/>
    <property type="match status" value="1"/>
</dbReference>
<dbReference type="Pfam" id="PF04204">
    <property type="entry name" value="HTS"/>
    <property type="match status" value="1"/>
</dbReference>
<dbReference type="PIRSF" id="PIRSF000450">
    <property type="entry name" value="H_ser_succinyltr"/>
    <property type="match status" value="1"/>
</dbReference>
<dbReference type="SUPFAM" id="SSF52317">
    <property type="entry name" value="Class I glutamine amidotransferase-like"/>
    <property type="match status" value="1"/>
</dbReference>
<comment type="function">
    <text evidence="2">Transfers a succinyl group from succinyl-CoA to L-homoserine, forming succinyl-L-homoserine.</text>
</comment>
<comment type="catalytic activity">
    <reaction evidence="2">
        <text>L-homoserine + succinyl-CoA = O-succinyl-L-homoserine + CoA</text>
        <dbReference type="Rhea" id="RHEA:22008"/>
        <dbReference type="ChEBI" id="CHEBI:57287"/>
        <dbReference type="ChEBI" id="CHEBI:57292"/>
        <dbReference type="ChEBI" id="CHEBI:57476"/>
        <dbReference type="ChEBI" id="CHEBI:57661"/>
        <dbReference type="EC" id="2.3.1.46"/>
    </reaction>
</comment>
<comment type="activity regulation">
    <text evidence="1">Allosterically inhibited by SAM and methionine.</text>
</comment>
<comment type="pathway">
    <text evidence="2">Amino-acid biosynthesis; L-methionine biosynthesis via de novo pathway; O-succinyl-L-homoserine from L-homoserine: step 1/1.</text>
</comment>
<comment type="subunit">
    <text evidence="2">Homodimer.</text>
</comment>
<comment type="subcellular location">
    <subcellularLocation>
        <location evidence="2">Cytoplasm</location>
    </subcellularLocation>
</comment>
<comment type="similarity">
    <text evidence="2">Belongs to the MetA family.</text>
</comment>
<protein>
    <recommendedName>
        <fullName evidence="2">Homoserine O-succinyltransferase</fullName>
        <shortName evidence="2">HST</shortName>
        <ecNumber evidence="2">2.3.1.46</ecNumber>
    </recommendedName>
    <alternativeName>
        <fullName evidence="2">Homoserine transsuccinylase</fullName>
        <shortName evidence="2">HTS</shortName>
    </alternativeName>
</protein>
<name>METAS_ECOL6</name>
<gene>
    <name evidence="2" type="primary">metAS</name>
    <name type="synonym">metA</name>
    <name type="ordered locus">c4970</name>
</gene>
<accession>Q8FB64</accession>
<evidence type="ECO:0000250" key="1"/>
<evidence type="ECO:0000255" key="2">
    <source>
        <dbReference type="HAMAP-Rule" id="MF_00295"/>
    </source>
</evidence>
<organism>
    <name type="scientific">Escherichia coli O6:H1 (strain CFT073 / ATCC 700928 / UPEC)</name>
    <dbReference type="NCBI Taxonomy" id="199310"/>
    <lineage>
        <taxon>Bacteria</taxon>
        <taxon>Pseudomonadati</taxon>
        <taxon>Pseudomonadota</taxon>
        <taxon>Gammaproteobacteria</taxon>
        <taxon>Enterobacterales</taxon>
        <taxon>Enterobacteriaceae</taxon>
        <taxon>Escherichia</taxon>
    </lineage>
</organism>
<feature type="initiator methionine" description="Removed" evidence="1">
    <location>
        <position position="1"/>
    </location>
</feature>
<feature type="chain" id="PRO_0000199749" description="Homoserine O-succinyltransferase">
    <location>
        <begin position="2"/>
        <end position="309"/>
    </location>
</feature>
<feature type="active site" description="Acyl-thioester intermediate" evidence="2">
    <location>
        <position position="142"/>
    </location>
</feature>
<feature type="active site" description="Proton acceptor" evidence="2">
    <location>
        <position position="235"/>
    </location>
</feature>
<feature type="active site" evidence="2">
    <location>
        <position position="237"/>
    </location>
</feature>
<feature type="binding site" evidence="2">
    <location>
        <position position="163"/>
    </location>
    <ligand>
        <name>substrate</name>
    </ligand>
</feature>
<feature type="binding site" evidence="2">
    <location>
        <position position="192"/>
    </location>
    <ligand>
        <name>substrate</name>
    </ligand>
</feature>
<feature type="binding site" evidence="2">
    <location>
        <position position="249"/>
    </location>
    <ligand>
        <name>substrate</name>
    </ligand>
</feature>
<feature type="site" description="Important for acyl-CoA specificity" evidence="2">
    <location>
        <position position="111"/>
    </location>
</feature>
<feature type="site" description="Important for substrate specificity" evidence="2">
    <location>
        <position position="192"/>
    </location>
</feature>
<keyword id="KW-0012">Acyltransferase</keyword>
<keyword id="KW-0028">Amino-acid biosynthesis</keyword>
<keyword id="KW-0963">Cytoplasm</keyword>
<keyword id="KW-0486">Methionine biosynthesis</keyword>
<keyword id="KW-1185">Reference proteome</keyword>
<keyword id="KW-0808">Transferase</keyword>
<proteinExistence type="inferred from homology"/>